<protein>
    <recommendedName>
        <fullName evidence="9">Cytochrome P450 monooxygenase FGM1</fullName>
        <ecNumber evidence="11">1.-.-.-</ecNumber>
    </recommendedName>
    <alternativeName>
        <fullName evidence="8">C64 cluster protein NRPS5</fullName>
    </alternativeName>
    <alternativeName>
        <fullName evidence="9">Fg3_54 cluster protein FGM1</fullName>
    </alternativeName>
    <alternativeName>
        <fullName evidence="9">Fusaoctaxin A biosynthesis cluster protein FGM1</fullName>
    </alternativeName>
</protein>
<name>FGM1_GIBZE</name>
<proteinExistence type="evidence at transcript level"/>
<reference key="1">
    <citation type="journal article" date="2007" name="Science">
        <title>The Fusarium graminearum genome reveals a link between localized polymorphism and pathogen specialization.</title>
        <authorList>
            <person name="Cuomo C.A."/>
            <person name="Gueldener U."/>
            <person name="Xu J.-R."/>
            <person name="Trail F."/>
            <person name="Turgeon B.G."/>
            <person name="Di Pietro A."/>
            <person name="Walton J.D."/>
            <person name="Ma L.-J."/>
            <person name="Baker S.E."/>
            <person name="Rep M."/>
            <person name="Adam G."/>
            <person name="Antoniw J."/>
            <person name="Baldwin T."/>
            <person name="Calvo S.E."/>
            <person name="Chang Y.-L."/>
            <person name="DeCaprio D."/>
            <person name="Gale L.R."/>
            <person name="Gnerre S."/>
            <person name="Goswami R.S."/>
            <person name="Hammond-Kosack K."/>
            <person name="Harris L.J."/>
            <person name="Hilburn K."/>
            <person name="Kennell J.C."/>
            <person name="Kroken S."/>
            <person name="Magnuson J.K."/>
            <person name="Mannhaupt G."/>
            <person name="Mauceli E.W."/>
            <person name="Mewes H.-W."/>
            <person name="Mitterbauer R."/>
            <person name="Muehlbauer G."/>
            <person name="Muensterkoetter M."/>
            <person name="Nelson D."/>
            <person name="O'Donnell K."/>
            <person name="Ouellet T."/>
            <person name="Qi W."/>
            <person name="Quesneville H."/>
            <person name="Roncero M.I.G."/>
            <person name="Seong K.-Y."/>
            <person name="Tetko I.V."/>
            <person name="Urban M."/>
            <person name="Waalwijk C."/>
            <person name="Ward T.J."/>
            <person name="Yao J."/>
            <person name="Birren B.W."/>
            <person name="Kistler H.C."/>
        </authorList>
    </citation>
    <scope>NUCLEOTIDE SEQUENCE [LARGE SCALE GENOMIC DNA]</scope>
    <source>
        <strain>ATCC MYA-4620 / CBS 123657 / FGSC 9075 / NRRL 31084 / PH-1</strain>
    </source>
</reference>
<reference key="2">
    <citation type="journal article" date="2010" name="Nature">
        <title>Comparative genomics reveals mobile pathogenicity chromosomes in Fusarium.</title>
        <authorList>
            <person name="Ma L.-J."/>
            <person name="van der Does H.C."/>
            <person name="Borkovich K.A."/>
            <person name="Coleman J.J."/>
            <person name="Daboussi M.-J."/>
            <person name="Di Pietro A."/>
            <person name="Dufresne M."/>
            <person name="Freitag M."/>
            <person name="Grabherr M."/>
            <person name="Henrissat B."/>
            <person name="Houterman P.M."/>
            <person name="Kang S."/>
            <person name="Shim W.-B."/>
            <person name="Woloshuk C."/>
            <person name="Xie X."/>
            <person name="Xu J.-R."/>
            <person name="Antoniw J."/>
            <person name="Baker S.E."/>
            <person name="Bluhm B.H."/>
            <person name="Breakspear A."/>
            <person name="Brown D.W."/>
            <person name="Butchko R.A.E."/>
            <person name="Chapman S."/>
            <person name="Coulson R."/>
            <person name="Coutinho P.M."/>
            <person name="Danchin E.G.J."/>
            <person name="Diener A."/>
            <person name="Gale L.R."/>
            <person name="Gardiner D.M."/>
            <person name="Goff S."/>
            <person name="Hammond-Kosack K.E."/>
            <person name="Hilburn K."/>
            <person name="Hua-Van A."/>
            <person name="Jonkers W."/>
            <person name="Kazan K."/>
            <person name="Kodira C.D."/>
            <person name="Koehrsen M."/>
            <person name="Kumar L."/>
            <person name="Lee Y.-H."/>
            <person name="Li L."/>
            <person name="Manners J.M."/>
            <person name="Miranda-Saavedra D."/>
            <person name="Mukherjee M."/>
            <person name="Park G."/>
            <person name="Park J."/>
            <person name="Park S.-Y."/>
            <person name="Proctor R.H."/>
            <person name="Regev A."/>
            <person name="Ruiz-Roldan M.C."/>
            <person name="Sain D."/>
            <person name="Sakthikumar S."/>
            <person name="Sykes S."/>
            <person name="Schwartz D.C."/>
            <person name="Turgeon B.G."/>
            <person name="Wapinski I."/>
            <person name="Yoder O."/>
            <person name="Young S."/>
            <person name="Zeng Q."/>
            <person name="Zhou S."/>
            <person name="Galagan J."/>
            <person name="Cuomo C.A."/>
            <person name="Kistler H.C."/>
            <person name="Rep M."/>
        </authorList>
    </citation>
    <scope>GENOME REANNOTATION</scope>
    <source>
        <strain>ATCC MYA-4620 / CBS 123657 / FGSC 9075 / NRRL 31084 / PH-1</strain>
    </source>
</reference>
<reference key="3">
    <citation type="journal article" date="2015" name="BMC Genomics">
        <title>The completed genome sequence of the pathogenic ascomycete fungus Fusarium graminearum.</title>
        <authorList>
            <person name="King R."/>
            <person name="Urban M."/>
            <person name="Hammond-Kosack M.C.U."/>
            <person name="Hassani-Pak K."/>
            <person name="Hammond-Kosack K.E."/>
        </authorList>
    </citation>
    <scope>NUCLEOTIDE SEQUENCE [LARGE SCALE GENOMIC DNA]</scope>
    <source>
        <strain>ATCC MYA-4620 / CBS 123657 / FGSC 9075 / NRRL 31084 / PH-1</strain>
    </source>
</reference>
<reference key="4">
    <citation type="submission" date="2017-01" db="UniProtKB">
        <authorList>
            <consortium name="EnsemblFungi"/>
        </authorList>
    </citation>
    <scope>IDENTIFICATION</scope>
    <source>
        <strain>ATCC MYA-4620 / CBS 123657 / FGSC 9075 / NRRL 31084 / PH-1</strain>
    </source>
</reference>
<reference key="5">
    <citation type="journal article" date="2012" name="Plant Cell">
        <title>In planta stage-specific fungal gene profiling elucidates the molecular strategies of Fusarium graminearum growing inside wheat coleoptiles.</title>
        <authorList>
            <person name="Zhang X.W."/>
            <person name="Jia L.J."/>
            <person name="Zhang Y."/>
            <person name="Jiang G."/>
            <person name="Li X."/>
            <person name="Zhang D."/>
            <person name="Tang W.H."/>
        </authorList>
    </citation>
    <scope>INDUCTION</scope>
</reference>
<reference key="6">
    <citation type="journal article" date="2014" name="PLoS ONE">
        <title>The Fusarium graminearum genome reveals more secondary metabolite gene clusters and hints of horizontal gene transfer.</title>
        <authorList>
            <person name="Sieber C.M."/>
            <person name="Lee W."/>
            <person name="Wong P."/>
            <person name="Muensterkoetter M."/>
            <person name="Mewes H.W."/>
            <person name="Schmeitzl C."/>
            <person name="Varga E."/>
            <person name="Berthiller F."/>
            <person name="Adam G."/>
            <person name="Gueldener U."/>
        </authorList>
    </citation>
    <scope>IDENTIFICATION</scope>
    <scope>INDUCTION</scope>
</reference>
<reference key="7">
    <citation type="journal article" date="2019" name="Nat. Commun.">
        <title>A linear nonribosomal octapeptide from Fusarium graminearum facilitates cell-to-cell invasion of wheat.</title>
        <authorList>
            <person name="Jia L.J."/>
            <person name="Tang H.Y."/>
            <person name="Wang W.Q."/>
            <person name="Yuan T.L."/>
            <person name="Wei W.Q."/>
            <person name="Pang B."/>
            <person name="Gong X.M."/>
            <person name="Wang S.F."/>
            <person name="Li Y.J."/>
            <person name="Zhang D."/>
            <person name="Liu W."/>
            <person name="Tang W.H."/>
        </authorList>
    </citation>
    <scope>FUNCTION</scope>
    <scope>DISRUPTION PHENOTYPE</scope>
</reference>
<reference key="8">
    <citation type="journal article" date="2019" name="Toxins">
        <title>Fusaoctaxin A, an example of a two-step mechanism for non-ribosomal peptide assembly and maturation in fungi.</title>
        <authorList>
            <person name="Westphal K.R."/>
            <person name="Nielsen K.A.H."/>
            <person name="Wollenberg R.D."/>
            <person name="Moellehoej M.B."/>
            <person name="Bachleitner S."/>
            <person name="Studt L."/>
            <person name="Lysoee E."/>
            <person name="Giese H."/>
            <person name="Wimmer R."/>
            <person name="Soerensen J.L."/>
            <person name="Sondergaard T.E."/>
        </authorList>
    </citation>
    <scope>FUNCTION</scope>
    <scope>INDUCTION</scope>
</reference>
<comment type="function">
    <text evidence="6 7 11">Cytochrome P450 monooxygenase; part of the Fg3_54/C64 gene cluster that mediates the biosynthesis of the octapeptide fusaoctaxin A, a virulence factor that is required for cell-to-cell invasiveness of plant host (PubMed:30804501). The 2 nonribosomal peptide synthetases NRPS9 and NRPS5 form an assembly line which likely utilizes GABA as a starter unit (loaded on the unique module M1 of NRPS9) and sequentially incorporates seven extender units composed of the residues L-Ala, L-allo-Ile, L-Ser, L-Val, L-Ser, L-Leu and L-Leu, respectively (PubMed:30804501, PubMed:31100892). During the process, each of the residues that are tethered on modules M3-M7 of NRPS5 containing an E domain can undergo an epimerization reaction to produce a D-configuration before the transpeptidation reaction occurs (PubMed:30804501, PubMed:31100892). The elongation of the peptidyl chain might be terminated by module M8-mediated L-Leu incorporation, followed by R domain-catalyzed 4 electron reduction to release the resulting octapeptide from the assembly line as an alcohol (PubMed:30804501, PubMed:31100892). Fusaoctaxin A is cleaved by the cluster specific ABC transporter FGM5 to the pentapeptide fusapentaxin A and the tripeptide fusatrixin A (PubMed:31100892). The other enzymes from the cluster, FGM1, FGM2, FGM3 and FGM9 seem not to be involved in the biosynthesis of fusaoctaxin A and their functions have still to be determined (Probable).</text>
</comment>
<comment type="cofactor">
    <cofactor evidence="1">
        <name>heme</name>
        <dbReference type="ChEBI" id="CHEBI:30413"/>
    </cofactor>
</comment>
<comment type="pathway">
    <text>Secondary metabolite biosynthesis.</text>
</comment>
<comment type="induction">
    <text evidence="4 5 7">Expression is positively regulated by the cluster-specific transcription factor FGM4 and is induced during infection of coleoptiles of wheat seedlings (PubMed:23266949, PubMed:25333987). The fusaoctaxin A gene cluster is silenced by H3K27 trimethylation by the histone methyltransferase KMT6 (PubMed:31100892).</text>
</comment>
<comment type="disruption phenotype">
    <text evidence="6">Produces significantly smaller lesions and fewer spikelets with blight symptoms on susceptible wheat cultivars.</text>
</comment>
<comment type="similarity">
    <text evidence="10">Belongs to the cytochrome P450 family.</text>
</comment>
<dbReference type="EC" id="1.-.-.-" evidence="11"/>
<dbReference type="EMBL" id="HG970334">
    <property type="protein sequence ID" value="CEF86137.1"/>
    <property type="molecule type" value="Genomic_DNA"/>
</dbReference>
<dbReference type="RefSeq" id="XP_011325379.1">
    <property type="nucleotide sequence ID" value="XM_011327077.1"/>
</dbReference>
<dbReference type="SMR" id="I1S2J5"/>
<dbReference type="STRING" id="229533.I1S2J5"/>
<dbReference type="GlyCosmos" id="I1S2J5">
    <property type="glycosylation" value="2 sites, No reported glycans"/>
</dbReference>
<dbReference type="KEGG" id="fgr:FGSG_10991"/>
<dbReference type="VEuPathDB" id="FungiDB:FGRAMPH1_01G20961"/>
<dbReference type="eggNOG" id="KOG0159">
    <property type="taxonomic scope" value="Eukaryota"/>
</dbReference>
<dbReference type="HOGENOM" id="CLU_001570_14_2_1"/>
<dbReference type="InParanoid" id="I1S2J5"/>
<dbReference type="OrthoDB" id="11778at110618"/>
<dbReference type="PHI-base" id="PHI:9040"/>
<dbReference type="Proteomes" id="UP000070720">
    <property type="component" value="Chromosome 3"/>
</dbReference>
<dbReference type="GO" id="GO:0020037">
    <property type="term" value="F:heme binding"/>
    <property type="evidence" value="ECO:0007669"/>
    <property type="project" value="InterPro"/>
</dbReference>
<dbReference type="GO" id="GO:0005506">
    <property type="term" value="F:iron ion binding"/>
    <property type="evidence" value="ECO:0007669"/>
    <property type="project" value="InterPro"/>
</dbReference>
<dbReference type="GO" id="GO:0004497">
    <property type="term" value="F:monooxygenase activity"/>
    <property type="evidence" value="ECO:0007669"/>
    <property type="project" value="UniProtKB-KW"/>
</dbReference>
<dbReference type="GO" id="GO:0016705">
    <property type="term" value="F:oxidoreductase activity, acting on paired donors, with incorporation or reduction of molecular oxygen"/>
    <property type="evidence" value="ECO:0007669"/>
    <property type="project" value="InterPro"/>
</dbReference>
<dbReference type="CDD" id="cd11059">
    <property type="entry name" value="CYP_fungal"/>
    <property type="match status" value="1"/>
</dbReference>
<dbReference type="Gene3D" id="1.10.630.10">
    <property type="entry name" value="Cytochrome P450"/>
    <property type="match status" value="1"/>
</dbReference>
<dbReference type="InterPro" id="IPR001128">
    <property type="entry name" value="Cyt_P450"/>
</dbReference>
<dbReference type="InterPro" id="IPR017972">
    <property type="entry name" value="Cyt_P450_CS"/>
</dbReference>
<dbReference type="InterPro" id="IPR002401">
    <property type="entry name" value="Cyt_P450_E_grp-I"/>
</dbReference>
<dbReference type="InterPro" id="IPR036396">
    <property type="entry name" value="Cyt_P450_sf"/>
</dbReference>
<dbReference type="InterPro" id="IPR050121">
    <property type="entry name" value="Cytochrome_P450_monoxygenase"/>
</dbReference>
<dbReference type="PANTHER" id="PTHR24305">
    <property type="entry name" value="CYTOCHROME P450"/>
    <property type="match status" value="1"/>
</dbReference>
<dbReference type="PANTHER" id="PTHR24305:SF218">
    <property type="entry name" value="P450, PUTATIVE (EUROFUNG)-RELATED"/>
    <property type="match status" value="1"/>
</dbReference>
<dbReference type="Pfam" id="PF00067">
    <property type="entry name" value="p450"/>
    <property type="match status" value="1"/>
</dbReference>
<dbReference type="PRINTS" id="PR00463">
    <property type="entry name" value="EP450I"/>
</dbReference>
<dbReference type="PRINTS" id="PR00385">
    <property type="entry name" value="P450"/>
</dbReference>
<dbReference type="SUPFAM" id="SSF48264">
    <property type="entry name" value="Cytochrome P450"/>
    <property type="match status" value="1"/>
</dbReference>
<dbReference type="PROSITE" id="PS00086">
    <property type="entry name" value="CYTOCHROME_P450"/>
    <property type="match status" value="1"/>
</dbReference>
<evidence type="ECO:0000250" key="1">
    <source>
        <dbReference type="UniProtKB" id="P04798"/>
    </source>
</evidence>
<evidence type="ECO:0000255" key="2"/>
<evidence type="ECO:0000255" key="3">
    <source>
        <dbReference type="PROSITE-ProRule" id="PRU00498"/>
    </source>
</evidence>
<evidence type="ECO:0000269" key="4">
    <source>
    </source>
</evidence>
<evidence type="ECO:0000269" key="5">
    <source>
    </source>
</evidence>
<evidence type="ECO:0000269" key="6">
    <source>
    </source>
</evidence>
<evidence type="ECO:0000269" key="7">
    <source>
    </source>
</evidence>
<evidence type="ECO:0000303" key="8">
    <source>
    </source>
</evidence>
<evidence type="ECO:0000303" key="9">
    <source>
    </source>
</evidence>
<evidence type="ECO:0000305" key="10"/>
<evidence type="ECO:0000305" key="11">
    <source>
    </source>
</evidence>
<sequence length="505" mass="57398">MPLILSITSSGTVLVLLTLLSLAAVVILSTYRLIKYRHIPGPLLCRVSHHYVTLFDLLRQRPQTVAKWHRQYGPFVQIAPGQVSISDVTAMRELYSSSARNPKSGYFDNFLYHNARAIFAEKEYLGHREKRGLVSSFFQATSVYKPDIQQPLRDRVLAAMMRIEENIITSGQGVVDVMPIINHYAWDNTTSLVFGPCHSSQALQGDENDRNLLARLKNSEMWGAVKNNLPIVFSGIKLAVAVYTRSTKYFSAEDDLDKWAMQRLYKTTSDPKSSQDERSIVQLIQHLRQNGRPLSDSYLESEIIDNLYAGQATVTVALTYAVYHLSRNPYWQSMVQRELDGLPRDADGLPNWTLLNKAPILEACIRESYRLNPVASGRAERVLARDSRYGDIFIPQNTIVSASTIALHLDPQVWLNPREFNPRRWLDATPDEILRLERSFIPFGYGARLCLGKAFANLQIKMFVAAIYSKDNTGLEIPGQTMEQWGTQDALPKGLKCRLRFEERK</sequence>
<accession>I1S2J5</accession>
<gene>
    <name evidence="9" type="primary">FGM1</name>
    <name type="ORF">FG10991</name>
    <name type="ORF">FGRAMPH1_01T20961</name>
</gene>
<feature type="signal peptide" evidence="2">
    <location>
        <begin position="1"/>
        <end position="23"/>
    </location>
</feature>
<feature type="chain" id="PRO_0000449950" description="Cytochrome P450 monooxygenase FGM1" evidence="2">
    <location>
        <begin position="24"/>
        <end position="505"/>
    </location>
</feature>
<feature type="binding site" description="axial binding residue" evidence="1">
    <location>
        <position position="450"/>
    </location>
    <ligand>
        <name>heme</name>
        <dbReference type="ChEBI" id="CHEBI:30413"/>
    </ligand>
    <ligandPart>
        <name>Fe</name>
        <dbReference type="ChEBI" id="CHEBI:18248"/>
    </ligandPart>
</feature>
<feature type="glycosylation site" description="N-linked (GlcNAc...) asparagine" evidence="3">
    <location>
        <position position="188"/>
    </location>
</feature>
<feature type="glycosylation site" description="N-linked (GlcNAc...) asparagine" evidence="3">
    <location>
        <position position="351"/>
    </location>
</feature>
<organism>
    <name type="scientific">Gibberella zeae (strain ATCC MYA-4620 / CBS 123657 / FGSC 9075 / NRRL 31084 / PH-1)</name>
    <name type="common">Wheat head blight fungus</name>
    <name type="synonym">Fusarium graminearum</name>
    <dbReference type="NCBI Taxonomy" id="229533"/>
    <lineage>
        <taxon>Eukaryota</taxon>
        <taxon>Fungi</taxon>
        <taxon>Dikarya</taxon>
        <taxon>Ascomycota</taxon>
        <taxon>Pezizomycotina</taxon>
        <taxon>Sordariomycetes</taxon>
        <taxon>Hypocreomycetidae</taxon>
        <taxon>Hypocreales</taxon>
        <taxon>Nectriaceae</taxon>
        <taxon>Fusarium</taxon>
    </lineage>
</organism>
<keyword id="KW-0325">Glycoprotein</keyword>
<keyword id="KW-0349">Heme</keyword>
<keyword id="KW-0408">Iron</keyword>
<keyword id="KW-0479">Metal-binding</keyword>
<keyword id="KW-0503">Monooxygenase</keyword>
<keyword id="KW-0560">Oxidoreductase</keyword>
<keyword id="KW-1185">Reference proteome</keyword>
<keyword id="KW-0732">Signal</keyword>